<protein>
    <recommendedName>
        <fullName>Nascent polypeptide-associated complex subunit alpha</fullName>
        <shortName>NAC-alpha</shortName>
    </recommendedName>
    <alternativeName>
        <fullName>Alpha-NAC</fullName>
    </alternativeName>
</protein>
<evidence type="ECO:0000250" key="1"/>
<evidence type="ECO:0000255" key="2">
    <source>
        <dbReference type="PROSITE-ProRule" id="PRU00507"/>
    </source>
</evidence>
<evidence type="ECO:0000256" key="3">
    <source>
        <dbReference type="SAM" id="MobiDB-lite"/>
    </source>
</evidence>
<evidence type="ECO:0000305" key="4"/>
<gene>
    <name type="primary">EGD2</name>
    <name type="ORF">PGUG_02440</name>
</gene>
<name>NACA_PICGU</name>
<organism>
    <name type="scientific">Meyerozyma guilliermondii (strain ATCC 6260 / CBS 566 / DSM 6381 / JCM 1539 / NBRC 10279 / NRRL Y-324)</name>
    <name type="common">Yeast</name>
    <name type="synonym">Candida guilliermondii</name>
    <dbReference type="NCBI Taxonomy" id="294746"/>
    <lineage>
        <taxon>Eukaryota</taxon>
        <taxon>Fungi</taxon>
        <taxon>Dikarya</taxon>
        <taxon>Ascomycota</taxon>
        <taxon>Saccharomycotina</taxon>
        <taxon>Pichiomycetes</taxon>
        <taxon>Debaryomycetaceae</taxon>
        <taxon>Meyerozyma</taxon>
    </lineage>
</organism>
<dbReference type="EMBL" id="CH408157">
    <property type="protein sequence ID" value="EDK38342.1"/>
    <property type="status" value="ALT_FRAME"/>
    <property type="molecule type" value="Genomic_DNA"/>
</dbReference>
<dbReference type="RefSeq" id="XP_001484711.1">
    <property type="nucleotide sequence ID" value="XM_001484661.1"/>
</dbReference>
<dbReference type="SMR" id="A5DGN9"/>
<dbReference type="FunCoup" id="A5DGN9">
    <property type="interactions" value="554"/>
</dbReference>
<dbReference type="STRING" id="294746.A5DGN9"/>
<dbReference type="GeneID" id="5126785"/>
<dbReference type="KEGG" id="pgu:PGUG_02440"/>
<dbReference type="eggNOG" id="KOG2239">
    <property type="taxonomic scope" value="Eukaryota"/>
</dbReference>
<dbReference type="HOGENOM" id="CLU_057806_2_1_1"/>
<dbReference type="InParanoid" id="A5DGN9"/>
<dbReference type="OrthoDB" id="3169036at2759"/>
<dbReference type="Proteomes" id="UP000001997">
    <property type="component" value="Unassembled WGS sequence"/>
</dbReference>
<dbReference type="GO" id="GO:0005854">
    <property type="term" value="C:nascent polypeptide-associated complex"/>
    <property type="evidence" value="ECO:0007669"/>
    <property type="project" value="InterPro"/>
</dbReference>
<dbReference type="GO" id="GO:0005634">
    <property type="term" value="C:nucleus"/>
    <property type="evidence" value="ECO:0007669"/>
    <property type="project" value="UniProtKB-SubCell"/>
</dbReference>
<dbReference type="GO" id="GO:0015031">
    <property type="term" value="P:protein transport"/>
    <property type="evidence" value="ECO:0007669"/>
    <property type="project" value="UniProtKB-KW"/>
</dbReference>
<dbReference type="CDD" id="cd22054">
    <property type="entry name" value="NAC_NACA"/>
    <property type="match status" value="1"/>
</dbReference>
<dbReference type="CDD" id="cd14358">
    <property type="entry name" value="UBA_NAC_euk"/>
    <property type="match status" value="1"/>
</dbReference>
<dbReference type="FunFam" id="2.20.70.30:FF:000002">
    <property type="entry name" value="Nascent polypeptide-associated complex (NAC), alpha subunit"/>
    <property type="match status" value="1"/>
</dbReference>
<dbReference type="Gene3D" id="1.10.8.10">
    <property type="entry name" value="DNA helicase RuvA subunit, C-terminal domain"/>
    <property type="match status" value="1"/>
</dbReference>
<dbReference type="Gene3D" id="2.20.70.30">
    <property type="entry name" value="Nascent polypeptide-associated complex domain"/>
    <property type="match status" value="1"/>
</dbReference>
<dbReference type="InterPro" id="IPR016641">
    <property type="entry name" value="EGD2/NACA0like"/>
</dbReference>
<dbReference type="InterPro" id="IPR044034">
    <property type="entry name" value="NAC-like_UBA"/>
</dbReference>
<dbReference type="InterPro" id="IPR038187">
    <property type="entry name" value="NAC_A/B_dom_sf"/>
</dbReference>
<dbReference type="InterPro" id="IPR002715">
    <property type="entry name" value="Nas_poly-pep-assoc_cplx_dom"/>
</dbReference>
<dbReference type="PANTHER" id="PTHR21713">
    <property type="entry name" value="NASCENT POLYPEPTIDE ASSOCIATED COMPLEX ALPHA SUBUNIT-RELATED"/>
    <property type="match status" value="1"/>
</dbReference>
<dbReference type="Pfam" id="PF01849">
    <property type="entry name" value="NAC"/>
    <property type="match status" value="1"/>
</dbReference>
<dbReference type="Pfam" id="PF19026">
    <property type="entry name" value="UBA_HYPK"/>
    <property type="match status" value="1"/>
</dbReference>
<dbReference type="PIRSF" id="PIRSF015901">
    <property type="entry name" value="NAC_alpha"/>
    <property type="match status" value="1"/>
</dbReference>
<dbReference type="SMART" id="SM01407">
    <property type="entry name" value="NAC"/>
    <property type="match status" value="1"/>
</dbReference>
<dbReference type="PROSITE" id="PS51151">
    <property type="entry name" value="NAC_AB"/>
    <property type="match status" value="1"/>
</dbReference>
<comment type="function">
    <text evidence="1">Component of the nascent polypeptide-associated complex (NAC), a dynamic component of the ribosomal exit tunnel, protecting the emerging polypeptides from interaction with other cytoplasmic proteins to ensure appropriate nascent protein targeting. The NAC complex also promotes mitochondrial protein import by enhancing productive ribosome interactions with the outer mitochondrial membrane and blocks the inappropriate interaction of ribosomes translating non-secretory nascent polypeptides with translocation sites in the membrane of the endoplasmic reticulum. EGD2 may also be involved in transcription regulation (By similarity).</text>
</comment>
<comment type="subunit">
    <text evidence="1">Part of the nascent polypeptide-associated complex (NAC), consisting of EGD2 and EGD1. NAC associates with ribosomes via EGD1 (By similarity).</text>
</comment>
<comment type="subcellular location">
    <subcellularLocation>
        <location evidence="1">Cytoplasm</location>
    </subcellularLocation>
    <subcellularLocation>
        <location evidence="1">Nucleus</location>
    </subcellularLocation>
    <text evidence="1">Predominantly cytoplasmic, may also transiently localize to the nucleus.</text>
</comment>
<comment type="similarity">
    <text evidence="4">Belongs to the NAC-alpha family.</text>
</comment>
<comment type="sequence caution" evidence="4">
    <conflict type="frameshift">
        <sequence resource="EMBL-CDS" id="EDK38342"/>
    </conflict>
</comment>
<reference key="1">
    <citation type="journal article" date="2009" name="Nature">
        <title>Evolution of pathogenicity and sexual reproduction in eight Candida genomes.</title>
        <authorList>
            <person name="Butler G."/>
            <person name="Rasmussen M.D."/>
            <person name="Lin M.F."/>
            <person name="Santos M.A.S."/>
            <person name="Sakthikumar S."/>
            <person name="Munro C.A."/>
            <person name="Rheinbay E."/>
            <person name="Grabherr M."/>
            <person name="Forche A."/>
            <person name="Reedy J.L."/>
            <person name="Agrafioti I."/>
            <person name="Arnaud M.B."/>
            <person name="Bates S."/>
            <person name="Brown A.J.P."/>
            <person name="Brunke S."/>
            <person name="Costanzo M.C."/>
            <person name="Fitzpatrick D.A."/>
            <person name="de Groot P.W.J."/>
            <person name="Harris D."/>
            <person name="Hoyer L.L."/>
            <person name="Hube B."/>
            <person name="Klis F.M."/>
            <person name="Kodira C."/>
            <person name="Lennard N."/>
            <person name="Logue M.E."/>
            <person name="Martin R."/>
            <person name="Neiman A.M."/>
            <person name="Nikolaou E."/>
            <person name="Quail M.A."/>
            <person name="Quinn J."/>
            <person name="Santos M.C."/>
            <person name="Schmitzberger F.F."/>
            <person name="Sherlock G."/>
            <person name="Shah P."/>
            <person name="Silverstein K.A.T."/>
            <person name="Skrzypek M.S."/>
            <person name="Soll D."/>
            <person name="Staggs R."/>
            <person name="Stansfield I."/>
            <person name="Stumpf M.P.H."/>
            <person name="Sudbery P.E."/>
            <person name="Srikantha T."/>
            <person name="Zeng Q."/>
            <person name="Berman J."/>
            <person name="Berriman M."/>
            <person name="Heitman J."/>
            <person name="Gow N.A.R."/>
            <person name="Lorenz M.C."/>
            <person name="Birren B.W."/>
            <person name="Kellis M."/>
            <person name="Cuomo C.A."/>
        </authorList>
    </citation>
    <scope>NUCLEOTIDE SEQUENCE [LARGE SCALE GENOMIC DNA]</scope>
    <source>
        <strain>ATCC 6260 / CBS 566 / DSM 6381 / JCM 1539 / NBRC 10279 / NRRL Y-324</strain>
    </source>
</reference>
<keyword id="KW-0963">Cytoplasm</keyword>
<keyword id="KW-0539">Nucleus</keyword>
<keyword id="KW-0653">Protein transport</keyword>
<keyword id="KW-1185">Reference proteome</keyword>
<keyword id="KW-0813">Transport</keyword>
<accession>A5DGN9</accession>
<proteinExistence type="inferred from homology"/>
<sequence length="178" mass="19548">MSIEEIPEEIPQGADVTILSKNEKKARELIKKLHLKPVPGITRVTFKQKGNLIYAIEQPDVFKSAAGTYVVFGEAKVDDMNKRIAEAQAQQEQQEALTKAAADAETADKSPESITNDLQNASLEDKTVEEDEGEVDETGLDSKDIEIIVEQTQVSRAKAVKALRAHKGDMVNAIMELS</sequence>
<feature type="chain" id="PRO_0000294528" description="Nascent polypeptide-associated complex subunit alpha">
    <location>
        <begin position="1"/>
        <end position="178"/>
    </location>
</feature>
<feature type="domain" description="NAC-A/B" evidence="2">
    <location>
        <begin position="20"/>
        <end position="84"/>
    </location>
</feature>
<feature type="domain" description="UBA">
    <location>
        <begin position="140"/>
        <end position="178"/>
    </location>
</feature>
<feature type="region of interest" description="Disordered" evidence="3">
    <location>
        <begin position="87"/>
        <end position="142"/>
    </location>
</feature>
<feature type="compositionally biased region" description="Low complexity" evidence="3">
    <location>
        <begin position="87"/>
        <end position="104"/>
    </location>
</feature>
<feature type="compositionally biased region" description="Polar residues" evidence="3">
    <location>
        <begin position="112"/>
        <end position="122"/>
    </location>
</feature>
<feature type="compositionally biased region" description="Acidic residues" evidence="3">
    <location>
        <begin position="127"/>
        <end position="139"/>
    </location>
</feature>